<dbReference type="EC" id="2.4.1.21" evidence="1"/>
<dbReference type="EMBL" id="CP000514">
    <property type="protein sequence ID" value="ABM18521.1"/>
    <property type="molecule type" value="Genomic_DNA"/>
</dbReference>
<dbReference type="RefSeq" id="WP_011784923.1">
    <property type="nucleotide sequence ID" value="NC_008740.1"/>
</dbReference>
<dbReference type="SMR" id="A1U0K2"/>
<dbReference type="STRING" id="351348.Maqu_1435"/>
<dbReference type="CAZy" id="GT5">
    <property type="family name" value="Glycosyltransferase Family 5"/>
</dbReference>
<dbReference type="KEGG" id="maq:Maqu_1435"/>
<dbReference type="eggNOG" id="COG0297">
    <property type="taxonomic scope" value="Bacteria"/>
</dbReference>
<dbReference type="HOGENOM" id="CLU_009583_18_2_6"/>
<dbReference type="OrthoDB" id="9808590at2"/>
<dbReference type="UniPathway" id="UPA00164"/>
<dbReference type="Proteomes" id="UP000000998">
    <property type="component" value="Chromosome"/>
</dbReference>
<dbReference type="GO" id="GO:0005829">
    <property type="term" value="C:cytosol"/>
    <property type="evidence" value="ECO:0007669"/>
    <property type="project" value="TreeGrafter"/>
</dbReference>
<dbReference type="GO" id="GO:0009011">
    <property type="term" value="F:alpha-1,4-glucan glucosyltransferase (ADP-glucose donor) activity"/>
    <property type="evidence" value="ECO:0007669"/>
    <property type="project" value="UniProtKB-UniRule"/>
</dbReference>
<dbReference type="GO" id="GO:0004373">
    <property type="term" value="F:alpha-1,4-glucan glucosyltransferase (UDP-glucose donor) activity"/>
    <property type="evidence" value="ECO:0007669"/>
    <property type="project" value="InterPro"/>
</dbReference>
<dbReference type="GO" id="GO:0005978">
    <property type="term" value="P:glycogen biosynthetic process"/>
    <property type="evidence" value="ECO:0007669"/>
    <property type="project" value="UniProtKB-UniRule"/>
</dbReference>
<dbReference type="CDD" id="cd03791">
    <property type="entry name" value="GT5_Glycogen_synthase_DULL1-like"/>
    <property type="match status" value="1"/>
</dbReference>
<dbReference type="Gene3D" id="3.40.50.2000">
    <property type="entry name" value="Glycogen Phosphorylase B"/>
    <property type="match status" value="2"/>
</dbReference>
<dbReference type="HAMAP" id="MF_00484">
    <property type="entry name" value="Glycogen_synth"/>
    <property type="match status" value="1"/>
</dbReference>
<dbReference type="InterPro" id="IPR001296">
    <property type="entry name" value="Glyco_trans_1"/>
</dbReference>
<dbReference type="InterPro" id="IPR011835">
    <property type="entry name" value="GS/SS"/>
</dbReference>
<dbReference type="InterPro" id="IPR013534">
    <property type="entry name" value="Starch_synth_cat_dom"/>
</dbReference>
<dbReference type="NCBIfam" id="TIGR02095">
    <property type="entry name" value="glgA"/>
    <property type="match status" value="1"/>
</dbReference>
<dbReference type="NCBIfam" id="NF001899">
    <property type="entry name" value="PRK00654.1-2"/>
    <property type="match status" value="1"/>
</dbReference>
<dbReference type="PANTHER" id="PTHR45825:SF11">
    <property type="entry name" value="ALPHA AMYLASE DOMAIN-CONTAINING PROTEIN"/>
    <property type="match status" value="1"/>
</dbReference>
<dbReference type="PANTHER" id="PTHR45825">
    <property type="entry name" value="GRANULE-BOUND STARCH SYNTHASE 1, CHLOROPLASTIC/AMYLOPLASTIC"/>
    <property type="match status" value="1"/>
</dbReference>
<dbReference type="Pfam" id="PF08323">
    <property type="entry name" value="Glyco_transf_5"/>
    <property type="match status" value="1"/>
</dbReference>
<dbReference type="Pfam" id="PF00534">
    <property type="entry name" value="Glycos_transf_1"/>
    <property type="match status" value="1"/>
</dbReference>
<dbReference type="SUPFAM" id="SSF53756">
    <property type="entry name" value="UDP-Glycosyltransferase/glycogen phosphorylase"/>
    <property type="match status" value="1"/>
</dbReference>
<protein>
    <recommendedName>
        <fullName evidence="1">Glycogen synthase</fullName>
        <ecNumber evidence="1">2.4.1.21</ecNumber>
    </recommendedName>
    <alternativeName>
        <fullName evidence="1">Starch [bacterial glycogen] synthase</fullName>
    </alternativeName>
</protein>
<proteinExistence type="inferred from homology"/>
<gene>
    <name evidence="1" type="primary">glgA</name>
    <name type="ordered locus">Maqu_1435</name>
</gene>
<organism>
    <name type="scientific">Marinobacter nauticus (strain ATCC 700491 / DSM 11845 / VT8)</name>
    <name type="common">Marinobacter aquaeolei</name>
    <dbReference type="NCBI Taxonomy" id="351348"/>
    <lineage>
        <taxon>Bacteria</taxon>
        <taxon>Pseudomonadati</taxon>
        <taxon>Pseudomonadota</taxon>
        <taxon>Gammaproteobacteria</taxon>
        <taxon>Pseudomonadales</taxon>
        <taxon>Marinobacteraceae</taxon>
        <taxon>Marinobacter</taxon>
    </lineage>
</organism>
<accession>A1U0K2</accession>
<reference key="1">
    <citation type="journal article" date="2011" name="Appl. Environ. Microbiol.">
        <title>Genomic potential of Marinobacter aquaeolei, a biogeochemical 'opportunitroph'.</title>
        <authorList>
            <person name="Singer E."/>
            <person name="Webb E.A."/>
            <person name="Nelson W.C."/>
            <person name="Heidelberg J.F."/>
            <person name="Ivanova N."/>
            <person name="Pati A."/>
            <person name="Edwards K.J."/>
        </authorList>
    </citation>
    <scope>NUCLEOTIDE SEQUENCE [LARGE SCALE GENOMIC DNA]</scope>
    <source>
        <strain>ATCC 700491 / DSM 11845 / VT8</strain>
    </source>
</reference>
<sequence>MTRVLFATSEVFPLVKTGGLADVSASLPEALCRLGYDCQILLPGYPAALKAAREAGSRRKTRFRYGQYDVSLWQTRLPGTAVTLWLVDCPALFDRAGDSPYQNEEGEDWWDNAHRFHLFGRIGAMLALGQLGLAWRPDIVHCNDWQSALIPVFLADSQDAPKTVFTIHNLAYQGLFSHETFRALGLPDSLWRYEFLEFHGQLSFIKGGLVFSDAITTVSPSYADEIQTPWFGNGLDGLLRHKSSRLHGILNGIDTRQWNPEADPHLEFHYGADYPANKSQCQARLQQELGLEVCGAPLLGFVGRLVEQKGLDWLLGVIKPLLERGCQFALLGSGEHHYQESLKAMVREWPGQCSLTLGYNEGLAHRITAGADIFLMPSRFEPCGLNQMYSLRYGTVPVVHGVGGLNDTVFDPNEETPEQANGFVFREATPDALHAAITRALAAREDRKTWRKLQENGMKGDYSWKNRAGEYAALYRNLIAGNDRIHED</sequence>
<feature type="chain" id="PRO_1000206432" description="Glycogen synthase">
    <location>
        <begin position="1"/>
        <end position="488"/>
    </location>
</feature>
<feature type="binding site" evidence="1">
    <location>
        <position position="16"/>
    </location>
    <ligand>
        <name>ADP-alpha-D-glucose</name>
        <dbReference type="ChEBI" id="CHEBI:57498"/>
    </ligand>
</feature>
<name>GLGA_MARN8</name>
<keyword id="KW-0320">Glycogen biosynthesis</keyword>
<keyword id="KW-0328">Glycosyltransferase</keyword>
<keyword id="KW-0808">Transferase</keyword>
<evidence type="ECO:0000255" key="1">
    <source>
        <dbReference type="HAMAP-Rule" id="MF_00484"/>
    </source>
</evidence>
<comment type="function">
    <text evidence="1">Synthesizes alpha-1,4-glucan chains using ADP-glucose.</text>
</comment>
<comment type="catalytic activity">
    <reaction evidence="1">
        <text>[(1-&gt;4)-alpha-D-glucosyl](n) + ADP-alpha-D-glucose = [(1-&gt;4)-alpha-D-glucosyl](n+1) + ADP + H(+)</text>
        <dbReference type="Rhea" id="RHEA:18189"/>
        <dbReference type="Rhea" id="RHEA-COMP:9584"/>
        <dbReference type="Rhea" id="RHEA-COMP:9587"/>
        <dbReference type="ChEBI" id="CHEBI:15378"/>
        <dbReference type="ChEBI" id="CHEBI:15444"/>
        <dbReference type="ChEBI" id="CHEBI:57498"/>
        <dbReference type="ChEBI" id="CHEBI:456216"/>
        <dbReference type="EC" id="2.4.1.21"/>
    </reaction>
</comment>
<comment type="pathway">
    <text evidence="1">Glycan biosynthesis; glycogen biosynthesis.</text>
</comment>
<comment type="similarity">
    <text evidence="1">Belongs to the glycosyltransferase 1 family. Bacterial/plant glycogen synthase subfamily.</text>
</comment>